<dbReference type="EMBL" id="AE000783">
    <property type="protein sequence ID" value="AAC66842.1"/>
    <property type="molecule type" value="Genomic_DNA"/>
</dbReference>
<dbReference type="PIR" id="C70162">
    <property type="entry name" value="C70162"/>
</dbReference>
<dbReference type="RefSeq" id="NP_212634.1">
    <property type="nucleotide sequence ID" value="NC_001318.1"/>
</dbReference>
<dbReference type="RefSeq" id="WP_002656307.1">
    <property type="nucleotide sequence ID" value="NC_001318.1"/>
</dbReference>
<dbReference type="PDB" id="8FMW">
    <property type="method" value="EM"/>
    <property type="resolution" value="2.86 A"/>
    <property type="chains" value="M=1-114"/>
</dbReference>
<dbReference type="PDBsum" id="8FMW"/>
<dbReference type="EMDB" id="EMD-29298"/>
<dbReference type="SMR" id="O51453"/>
<dbReference type="STRING" id="224326.BB_0500"/>
<dbReference type="PaxDb" id="224326-BB_0500"/>
<dbReference type="EnsemblBacteria" id="AAC66842">
    <property type="protein sequence ID" value="AAC66842"/>
    <property type="gene ID" value="BB_0500"/>
</dbReference>
<dbReference type="GeneID" id="56567935"/>
<dbReference type="KEGG" id="bbu:BB_0500"/>
<dbReference type="PATRIC" id="fig|224326.49.peg.891"/>
<dbReference type="HOGENOM" id="CLU_103849_1_2_12"/>
<dbReference type="OrthoDB" id="9803610at2"/>
<dbReference type="Proteomes" id="UP000001807">
    <property type="component" value="Chromosome"/>
</dbReference>
<dbReference type="GO" id="GO:0005829">
    <property type="term" value="C:cytosol"/>
    <property type="evidence" value="ECO:0007669"/>
    <property type="project" value="TreeGrafter"/>
</dbReference>
<dbReference type="GO" id="GO:0015935">
    <property type="term" value="C:small ribosomal subunit"/>
    <property type="evidence" value="ECO:0007669"/>
    <property type="project" value="TreeGrafter"/>
</dbReference>
<dbReference type="GO" id="GO:0019843">
    <property type="term" value="F:rRNA binding"/>
    <property type="evidence" value="ECO:0007669"/>
    <property type="project" value="UniProtKB-UniRule"/>
</dbReference>
<dbReference type="GO" id="GO:0003735">
    <property type="term" value="F:structural constituent of ribosome"/>
    <property type="evidence" value="ECO:0007669"/>
    <property type="project" value="InterPro"/>
</dbReference>
<dbReference type="GO" id="GO:0000049">
    <property type="term" value="F:tRNA binding"/>
    <property type="evidence" value="ECO:0007669"/>
    <property type="project" value="UniProtKB-UniRule"/>
</dbReference>
<dbReference type="GO" id="GO:0006412">
    <property type="term" value="P:translation"/>
    <property type="evidence" value="ECO:0007669"/>
    <property type="project" value="UniProtKB-UniRule"/>
</dbReference>
<dbReference type="FunFam" id="1.10.8.50:FF:000001">
    <property type="entry name" value="30S ribosomal protein S13"/>
    <property type="match status" value="1"/>
</dbReference>
<dbReference type="FunFam" id="4.10.910.10:FF:000001">
    <property type="entry name" value="30S ribosomal protein S13"/>
    <property type="match status" value="1"/>
</dbReference>
<dbReference type="Gene3D" id="1.10.8.50">
    <property type="match status" value="1"/>
</dbReference>
<dbReference type="Gene3D" id="4.10.910.10">
    <property type="entry name" value="30s ribosomal protein s13, domain 2"/>
    <property type="match status" value="1"/>
</dbReference>
<dbReference type="HAMAP" id="MF_01315">
    <property type="entry name" value="Ribosomal_uS13"/>
    <property type="match status" value="1"/>
</dbReference>
<dbReference type="InterPro" id="IPR027437">
    <property type="entry name" value="Rbsml_uS13_C"/>
</dbReference>
<dbReference type="InterPro" id="IPR001892">
    <property type="entry name" value="Ribosomal_uS13"/>
</dbReference>
<dbReference type="InterPro" id="IPR010979">
    <property type="entry name" value="Ribosomal_uS13-like_H2TH"/>
</dbReference>
<dbReference type="InterPro" id="IPR019980">
    <property type="entry name" value="Ribosomal_uS13_bac-type"/>
</dbReference>
<dbReference type="InterPro" id="IPR018269">
    <property type="entry name" value="Ribosomal_uS13_CS"/>
</dbReference>
<dbReference type="NCBIfam" id="TIGR03631">
    <property type="entry name" value="uS13_bact"/>
    <property type="match status" value="1"/>
</dbReference>
<dbReference type="PANTHER" id="PTHR10871">
    <property type="entry name" value="30S RIBOSOMAL PROTEIN S13/40S RIBOSOMAL PROTEIN S18"/>
    <property type="match status" value="1"/>
</dbReference>
<dbReference type="PANTHER" id="PTHR10871:SF1">
    <property type="entry name" value="SMALL RIBOSOMAL SUBUNIT PROTEIN US13M"/>
    <property type="match status" value="1"/>
</dbReference>
<dbReference type="Pfam" id="PF00416">
    <property type="entry name" value="Ribosomal_S13"/>
    <property type="match status" value="1"/>
</dbReference>
<dbReference type="PIRSF" id="PIRSF002134">
    <property type="entry name" value="Ribosomal_S13"/>
    <property type="match status" value="1"/>
</dbReference>
<dbReference type="SUPFAM" id="SSF46946">
    <property type="entry name" value="S13-like H2TH domain"/>
    <property type="match status" value="1"/>
</dbReference>
<dbReference type="PROSITE" id="PS00646">
    <property type="entry name" value="RIBOSOMAL_S13_1"/>
    <property type="match status" value="1"/>
</dbReference>
<dbReference type="PROSITE" id="PS50159">
    <property type="entry name" value="RIBOSOMAL_S13_2"/>
    <property type="match status" value="1"/>
</dbReference>
<name>RS13_BORBU</name>
<keyword id="KW-0002">3D-structure</keyword>
<keyword id="KW-1185">Reference proteome</keyword>
<keyword id="KW-0687">Ribonucleoprotein</keyword>
<keyword id="KW-0689">Ribosomal protein</keyword>
<keyword id="KW-0694">RNA-binding</keyword>
<keyword id="KW-0699">rRNA-binding</keyword>
<keyword id="KW-0820">tRNA-binding</keyword>
<accession>O51453</accession>
<reference key="1">
    <citation type="journal article" date="1997" name="Nature">
        <title>Genomic sequence of a Lyme disease spirochaete, Borrelia burgdorferi.</title>
        <authorList>
            <person name="Fraser C.M."/>
            <person name="Casjens S."/>
            <person name="Huang W.M."/>
            <person name="Sutton G.G."/>
            <person name="Clayton R.A."/>
            <person name="Lathigra R."/>
            <person name="White O."/>
            <person name="Ketchum K.A."/>
            <person name="Dodson R.J."/>
            <person name="Hickey E.K."/>
            <person name="Gwinn M.L."/>
            <person name="Dougherty B.A."/>
            <person name="Tomb J.-F."/>
            <person name="Fleischmann R.D."/>
            <person name="Richardson D.L."/>
            <person name="Peterson J.D."/>
            <person name="Kerlavage A.R."/>
            <person name="Quackenbush J."/>
            <person name="Salzberg S.L."/>
            <person name="Hanson M."/>
            <person name="van Vugt R."/>
            <person name="Palmer N."/>
            <person name="Adams M.D."/>
            <person name="Gocayne J.D."/>
            <person name="Weidman J.F."/>
            <person name="Utterback T.R."/>
            <person name="Watthey L."/>
            <person name="McDonald L.A."/>
            <person name="Artiach P."/>
            <person name="Bowman C."/>
            <person name="Garland S.A."/>
            <person name="Fujii C."/>
            <person name="Cotton M.D."/>
            <person name="Horst K."/>
            <person name="Roberts K.M."/>
            <person name="Hatch B."/>
            <person name="Smith H.O."/>
            <person name="Venter J.C."/>
        </authorList>
    </citation>
    <scope>NUCLEOTIDE SEQUENCE [LARGE SCALE GENOMIC DNA]</scope>
    <source>
        <strain>ATCC 35210 / DSM 4680 / CIP 102532 / B31</strain>
    </source>
</reference>
<organism>
    <name type="scientific">Borreliella burgdorferi (strain ATCC 35210 / DSM 4680 / CIP 102532 / B31)</name>
    <name type="common">Borrelia burgdorferi</name>
    <dbReference type="NCBI Taxonomy" id="224326"/>
    <lineage>
        <taxon>Bacteria</taxon>
        <taxon>Pseudomonadati</taxon>
        <taxon>Spirochaetota</taxon>
        <taxon>Spirochaetia</taxon>
        <taxon>Spirochaetales</taxon>
        <taxon>Borreliaceae</taxon>
        <taxon>Borreliella</taxon>
    </lineage>
</organism>
<proteinExistence type="evidence at protein level"/>
<protein>
    <recommendedName>
        <fullName evidence="1">Small ribosomal subunit protein uS13</fullName>
    </recommendedName>
    <alternativeName>
        <fullName evidence="3">30S ribosomal protein S13</fullName>
    </alternativeName>
</protein>
<gene>
    <name evidence="1" type="primary">rpsM</name>
    <name type="ordered locus">BB_0500</name>
</gene>
<sequence length="125" mass="14078">MARISGIDLPNNKQLKIALTSIYGIGRTRALEVCNKSSISPSKIAKDLDNDEVNRLRKVIESDYIVEGKLRSEVAMSIKRLMDIACYRGVRHRKGLPLRGQRTKTNARTRKGKRKTVANKKIASK</sequence>
<comment type="function">
    <text evidence="1">Located at the top of the head of the 30S subunit, it contacts several helices of the 16S rRNA. In the 70S ribosome it contacts the 23S rRNA (bridge B1a) and protein L5 of the 50S subunit (bridge B1b), connecting the 2 subunits; these bridges are implicated in subunit movement. Contacts the tRNAs in the A and P-sites.</text>
</comment>
<comment type="subunit">
    <text evidence="1">Part of the 30S ribosomal subunit. Forms a loose heterodimer with protein S19. Forms two bridges to the 50S subunit in the 70S ribosome.</text>
</comment>
<comment type="similarity">
    <text evidence="1">Belongs to the universal ribosomal protein uS13 family.</text>
</comment>
<feature type="chain" id="PRO_0000132068" description="Small ribosomal subunit protein uS13">
    <location>
        <begin position="1"/>
        <end position="125"/>
    </location>
</feature>
<feature type="region of interest" description="Disordered" evidence="2">
    <location>
        <begin position="95"/>
        <end position="125"/>
    </location>
</feature>
<evidence type="ECO:0000255" key="1">
    <source>
        <dbReference type="HAMAP-Rule" id="MF_01315"/>
    </source>
</evidence>
<evidence type="ECO:0000256" key="2">
    <source>
        <dbReference type="SAM" id="MobiDB-lite"/>
    </source>
</evidence>
<evidence type="ECO:0000305" key="3"/>